<proteinExistence type="evidence at protein level"/>
<protein>
    <recommendedName>
        <fullName>Neuroligin-1</fullName>
    </recommendedName>
</protein>
<keyword id="KW-0025">Alternative splicing</keyword>
<keyword id="KW-0130">Cell adhesion</keyword>
<keyword id="KW-1003">Cell membrane</keyword>
<keyword id="KW-1015">Disulfide bond</keyword>
<keyword id="KW-0325">Glycoprotein</keyword>
<keyword id="KW-0472">Membrane</keyword>
<keyword id="KW-1185">Reference proteome</keyword>
<keyword id="KW-0732">Signal</keyword>
<keyword id="KW-0770">Synapse</keyword>
<keyword id="KW-0812">Transmembrane</keyword>
<keyword id="KW-1133">Transmembrane helix</keyword>
<comment type="function">
    <text evidence="2 7 8">Probable neuronal cell surface protein thought to be involved in cell-cell-interactions by forming intercellular junctions through binding to beta-neurexins (By similarity). Plays a role in the clustering of the GABA(A) receptor unc-49 at postsynaptic sites in neuromuscular junctions (NMJs) via the interaction with madd-4 and neurexin nrx-1 and is thereby required for normal GABAergic synaptic transmission (PubMed:26028574, PubMed:26028575).</text>
</comment>
<comment type="subunit">
    <text evidence="7 8">Interacts (via extracellular domain) with isoform b of madd-4; the interaction is required for the localization to postsynaptic domains (PubMed:26028574, PubMed:26028575). Interacts with unc-49 (PubMed:26028575).</text>
</comment>
<comment type="subcellular location">
    <subcellularLocation>
        <location evidence="9">Cell membrane</location>
        <topology evidence="9">Single-pass type I membrane protein</topology>
    </subcellularLocation>
    <subcellularLocation>
        <location evidence="7 8">Synapse</location>
    </subcellularLocation>
    <text evidence="7 8">Localizes specifically to GABAergic synapses.</text>
</comment>
<comment type="alternative products">
    <event type="alternative splicing"/>
    <isoform>
        <id>Q9XTG1-1</id>
        <name>a</name>
        <sequence type="displayed"/>
    </isoform>
    <isoform>
        <id>Q9XTG1-2</id>
        <name>b</name>
        <sequence type="described" ref="VSP_020296"/>
    </isoform>
</comment>
<comment type="domain">
    <text evidence="7 8">The cytoplasmic region is required for GABA(A) receptor clustering.</text>
</comment>
<comment type="domain">
    <text evidence="7 8">The extracellular region is required for the localization to synapses and for GABA(A) receptor clustering.</text>
</comment>
<comment type="similarity">
    <text evidence="9">Belongs to the type-B carboxylesterase/lipase family.</text>
</comment>
<organism>
    <name type="scientific">Caenorhabditis elegans</name>
    <dbReference type="NCBI Taxonomy" id="6239"/>
    <lineage>
        <taxon>Eukaryota</taxon>
        <taxon>Metazoa</taxon>
        <taxon>Ecdysozoa</taxon>
        <taxon>Nematoda</taxon>
        <taxon>Chromadorea</taxon>
        <taxon>Rhabditida</taxon>
        <taxon>Rhabditina</taxon>
        <taxon>Rhabditomorpha</taxon>
        <taxon>Rhabditoidea</taxon>
        <taxon>Rhabditidae</taxon>
        <taxon>Peloderinae</taxon>
        <taxon>Caenorhabditis</taxon>
    </lineage>
</organism>
<dbReference type="EMBL" id="Z70266">
    <property type="protein sequence ID" value="CAD57691.1"/>
    <property type="molecule type" value="Genomic_DNA"/>
</dbReference>
<dbReference type="EMBL" id="AL023827">
    <property type="protein sequence ID" value="CAD57691.1"/>
    <property type="status" value="JOINED"/>
    <property type="molecule type" value="Genomic_DNA"/>
</dbReference>
<dbReference type="EMBL" id="Z70266">
    <property type="protein sequence ID" value="CAA94208.1"/>
    <property type="molecule type" value="Genomic_DNA"/>
</dbReference>
<dbReference type="EMBL" id="AL023827">
    <property type="protein sequence ID" value="CAA94208.1"/>
    <property type="status" value="JOINED"/>
    <property type="molecule type" value="Genomic_DNA"/>
</dbReference>
<dbReference type="PIR" id="T19864">
    <property type="entry name" value="T19864"/>
</dbReference>
<dbReference type="RefSeq" id="NP_510283.1">
    <molecule id="Q9XTG1-1"/>
    <property type="nucleotide sequence ID" value="NM_077882.6"/>
</dbReference>
<dbReference type="RefSeq" id="NP_872254.1">
    <molecule id="Q9XTG1-2"/>
    <property type="nucleotide sequence ID" value="NM_182454.4"/>
</dbReference>
<dbReference type="SMR" id="Q9XTG1"/>
<dbReference type="BioGRID" id="46385">
    <property type="interactions" value="4"/>
</dbReference>
<dbReference type="DIP" id="DIP-26014N"/>
<dbReference type="FunCoup" id="Q9XTG1">
    <property type="interactions" value="711"/>
</dbReference>
<dbReference type="STRING" id="6239.C40C9.5e.1"/>
<dbReference type="ESTHER" id="caeel-NLGN1">
    <property type="family name" value="Neuroligin"/>
</dbReference>
<dbReference type="TCDB" id="8.A.117.1.5">
    <property type="family name" value="the neuroligin (nlg) family"/>
</dbReference>
<dbReference type="GlyCosmos" id="Q9XTG1">
    <property type="glycosylation" value="3 sites, No reported glycans"/>
</dbReference>
<dbReference type="iPTMnet" id="Q9XTG1"/>
<dbReference type="PaxDb" id="6239-C40C9.5e"/>
<dbReference type="EnsemblMetazoa" id="C40C9.5a.1">
    <molecule id="Q9XTG1-1"/>
    <property type="protein sequence ID" value="C40C9.5a.1"/>
    <property type="gene ID" value="WBGene00006412"/>
</dbReference>
<dbReference type="EnsemblMetazoa" id="C40C9.5b.1">
    <molecule id="Q9XTG1-2"/>
    <property type="protein sequence ID" value="C40C9.5b.1"/>
    <property type="gene ID" value="WBGene00006412"/>
</dbReference>
<dbReference type="GeneID" id="181484"/>
<dbReference type="KEGG" id="cel:CELE_C40C9.5"/>
<dbReference type="UCSC" id="C40C9.5a">
    <molecule id="Q9XTG1-1"/>
    <property type="organism name" value="c. elegans"/>
</dbReference>
<dbReference type="AGR" id="WB:WBGene00006412"/>
<dbReference type="CTD" id="181484"/>
<dbReference type="WormBase" id="C40C9.5a">
    <molecule id="Q9XTG1-1"/>
    <property type="protein sequence ID" value="CE18546"/>
    <property type="gene ID" value="WBGene00006412"/>
    <property type="gene designation" value="nlg-1"/>
</dbReference>
<dbReference type="WormBase" id="C40C9.5b">
    <molecule id="Q9XTG1-2"/>
    <property type="protein sequence ID" value="CE32604"/>
    <property type="gene ID" value="WBGene00006412"/>
    <property type="gene designation" value="nlg-1"/>
</dbReference>
<dbReference type="eggNOG" id="KOG1516">
    <property type="taxonomic scope" value="Eukaryota"/>
</dbReference>
<dbReference type="GeneTree" id="ENSGT00940000169220"/>
<dbReference type="InParanoid" id="Q9XTG1"/>
<dbReference type="OrthoDB" id="3200163at2759"/>
<dbReference type="PhylomeDB" id="Q9XTG1"/>
<dbReference type="Reactome" id="R-CEL-192456">
    <property type="pathway name" value="Digestion of dietary lipid"/>
</dbReference>
<dbReference type="Reactome" id="R-CEL-6794361">
    <property type="pathway name" value="Neurexins and neuroligins"/>
</dbReference>
<dbReference type="PRO" id="PR:Q9XTG1"/>
<dbReference type="Proteomes" id="UP000001940">
    <property type="component" value="Chromosome X"/>
</dbReference>
<dbReference type="Bgee" id="WBGene00006412">
    <property type="expression patterns" value="Expressed in pharyngeal muscle cell (C elegans) and 3 other cell types or tissues"/>
</dbReference>
<dbReference type="ExpressionAtlas" id="Q9XTG1">
    <property type="expression patterns" value="baseline and differential"/>
</dbReference>
<dbReference type="GO" id="GO:0030424">
    <property type="term" value="C:axon"/>
    <property type="evidence" value="ECO:0000314"/>
    <property type="project" value="WormBase"/>
</dbReference>
<dbReference type="GO" id="GO:0009986">
    <property type="term" value="C:cell surface"/>
    <property type="evidence" value="ECO:0000318"/>
    <property type="project" value="GO_Central"/>
</dbReference>
<dbReference type="GO" id="GO:0030425">
    <property type="term" value="C:dendrite"/>
    <property type="evidence" value="ECO:0000314"/>
    <property type="project" value="WormBase"/>
</dbReference>
<dbReference type="GO" id="GO:0005886">
    <property type="term" value="C:plasma membrane"/>
    <property type="evidence" value="ECO:0007005"/>
    <property type="project" value="WormBase"/>
</dbReference>
<dbReference type="GO" id="GO:0098793">
    <property type="term" value="C:presynapse"/>
    <property type="evidence" value="ECO:0007669"/>
    <property type="project" value="GOC"/>
</dbReference>
<dbReference type="GO" id="GO:0045202">
    <property type="term" value="C:synapse"/>
    <property type="evidence" value="ECO:0000314"/>
    <property type="project" value="WormBase"/>
</dbReference>
<dbReference type="GO" id="GO:0042043">
    <property type="term" value="F:neurexin family protein binding"/>
    <property type="evidence" value="ECO:0000318"/>
    <property type="project" value="GO_Central"/>
</dbReference>
<dbReference type="GO" id="GO:0038023">
    <property type="term" value="F:signaling receptor activity"/>
    <property type="evidence" value="ECO:0000318"/>
    <property type="project" value="GO_Central"/>
</dbReference>
<dbReference type="GO" id="GO:0007268">
    <property type="term" value="P:chemical synaptic transmission"/>
    <property type="evidence" value="ECO:0000318"/>
    <property type="project" value="GO_Central"/>
</dbReference>
<dbReference type="GO" id="GO:0050804">
    <property type="term" value="P:modulation of chemical synaptic transmission"/>
    <property type="evidence" value="ECO:0000318"/>
    <property type="project" value="GO_Central"/>
</dbReference>
<dbReference type="GO" id="GO:0046929">
    <property type="term" value="P:negative regulation of neurotransmitter secretion"/>
    <property type="evidence" value="ECO:0000315"/>
    <property type="project" value="CACAO"/>
</dbReference>
<dbReference type="GO" id="GO:0007158">
    <property type="term" value="P:neuron cell-cell adhesion"/>
    <property type="evidence" value="ECO:0000318"/>
    <property type="project" value="GO_Central"/>
</dbReference>
<dbReference type="GO" id="GO:0097104">
    <property type="term" value="P:postsynaptic membrane assembly"/>
    <property type="evidence" value="ECO:0000318"/>
    <property type="project" value="GO_Central"/>
</dbReference>
<dbReference type="GO" id="GO:0097105">
    <property type="term" value="P:presynaptic membrane assembly"/>
    <property type="evidence" value="ECO:0000318"/>
    <property type="project" value="GO_Central"/>
</dbReference>
<dbReference type="GO" id="GO:0048488">
    <property type="term" value="P:synaptic vesicle endocytosis"/>
    <property type="evidence" value="ECO:0000318"/>
    <property type="project" value="GO_Central"/>
</dbReference>
<dbReference type="FunFam" id="3.40.50.1820:FF:000271">
    <property type="entry name" value="Neuroligin-1"/>
    <property type="match status" value="1"/>
</dbReference>
<dbReference type="Gene3D" id="3.40.50.1820">
    <property type="entry name" value="alpha/beta hydrolase"/>
    <property type="match status" value="1"/>
</dbReference>
<dbReference type="InterPro" id="IPR029058">
    <property type="entry name" value="AB_hydrolase_fold"/>
</dbReference>
<dbReference type="InterPro" id="IPR002018">
    <property type="entry name" value="CarbesteraseB"/>
</dbReference>
<dbReference type="InterPro" id="IPR051093">
    <property type="entry name" value="Neuroligin/BSAL"/>
</dbReference>
<dbReference type="PANTHER" id="PTHR43903">
    <property type="entry name" value="NEUROLIGIN"/>
    <property type="match status" value="1"/>
</dbReference>
<dbReference type="Pfam" id="PF00135">
    <property type="entry name" value="COesterase"/>
    <property type="match status" value="1"/>
</dbReference>
<dbReference type="SUPFAM" id="SSF53474">
    <property type="entry name" value="alpha/beta-Hydrolases"/>
    <property type="match status" value="1"/>
</dbReference>
<gene>
    <name type="primary">nlg-1</name>
    <name type="ORF">C40C9.5</name>
</gene>
<accession>Q9XTG1</accession>
<accession>Q8I0R2</accession>
<evidence type="ECO:0000250" key="1"/>
<evidence type="ECO:0000250" key="2">
    <source>
        <dbReference type="UniProtKB" id="Q99K10"/>
    </source>
</evidence>
<evidence type="ECO:0000255" key="3"/>
<evidence type="ECO:0000256" key="4">
    <source>
        <dbReference type="SAM" id="MobiDB-lite"/>
    </source>
</evidence>
<evidence type="ECO:0000269" key="5">
    <source>
    </source>
</evidence>
<evidence type="ECO:0000269" key="6">
    <source>
    </source>
</evidence>
<evidence type="ECO:0000269" key="7">
    <source>
    </source>
</evidence>
<evidence type="ECO:0000269" key="8">
    <source>
    </source>
</evidence>
<evidence type="ECO:0000305" key="9"/>
<sequence length="798" mass="89018">MERIYLLLLLFLPRIRSYDVRSVTTSWGMVRGEVVSPEGDDLPPVAQYLGIPYGVAPTGQYRFNMAISAAKWTHMPKDARKVSPVCIQTDMPELSETKAFKHTSAQRFDFNHRLLPHLKKQSEDCLYMNIYVPERLEISRDNYLPVMVIVHGEEYGWGTGNAFNGTTLAAYGHIIVVTLNYRLGVFGFLGRCESSSCSGNSGISDLVSALTMLNVILPSFGGDSKSVTLAGWGSGASLVSLLMASPLTQPGRRLFRRAILLDGSALSPWAISQNPQQYFMQLAEELACAPKNRTSSFNDNVDTIVRCMQVHSSENITKAVLKIDVPTFLSGFAPIVDGQLIPNKPQVSFSTQYGSLFREIDLLVGISSNPSHHMISNEDLKVGISKEKRMRIFRSLVRNLYDFHREEILASIINEYTDWENPRDHPKSIRNGVLNALSDVLYTAPLIETLRSHSADEVRKEANTFMFAFAHETRSWSQEQPNSGIRGSLSGDIVPYIFGYPLAQGDSEERLYSGFNTDDKGISKVMMHYVSNFVKSGDPSKPNPMSKNFPMGDVFHSTAWPQFDQPNREAYLEITDRPRVKNYYRNAQVGFWNNFIPQLHKNGKETEPVGEEHHLLSDHFRKDSYFGKTRHFSSYANLPFPPPPMPPSPPPELTTKPKPSESPTTLQTTTESEKAAAGSFTGKALGGVIFIGCGFLIMNVCLLIAVRREWGKKRRNEKKFQLQYQTYNSNHGGGAEQYNSLNSPEPLLSASHKNSTSMRPAGISPTCPRHGRAALALQNSRGNSLTAAQAPTLEEIQV</sequence>
<name>NLGN1_CAEEL</name>
<reference key="1">
    <citation type="journal article" date="1998" name="Science">
        <title>Genome sequence of the nematode C. elegans: a platform for investigating biology.</title>
        <authorList>
            <consortium name="The C. elegans sequencing consortium"/>
        </authorList>
    </citation>
    <scope>NUCLEOTIDE SEQUENCE [LARGE SCALE GENOMIC DNA]</scope>
    <scope>ALTERNATIVE SPLICING</scope>
    <source>
        <strain>Bristol N2</strain>
    </source>
</reference>
<reference key="2">
    <citation type="journal article" date="2003" name="Nat. Biotechnol.">
        <title>Lectin affinity capture, isotope-coded tagging and mass spectrometry to identify N-linked glycoproteins.</title>
        <authorList>
            <person name="Kaji H."/>
            <person name="Saito H."/>
            <person name="Yamauchi Y."/>
            <person name="Shinkawa T."/>
            <person name="Taoka M."/>
            <person name="Hirabayashi J."/>
            <person name="Kasai K."/>
            <person name="Takahashi N."/>
            <person name="Isobe T."/>
        </authorList>
    </citation>
    <scope>GLYCOSYLATION [LARGE SCALE ANALYSIS] AT ASN-315</scope>
    <scope>IDENTIFICATION BY MASS SPECTROMETRY</scope>
    <source>
        <strain>Bristol N2</strain>
    </source>
</reference>
<reference key="3">
    <citation type="journal article" date="2007" name="Mol. Cell. Proteomics">
        <title>Proteomics reveals N-linked glycoprotein diversity in Caenorhabditis elegans and suggests an atypical translocation mechanism for integral membrane proteins.</title>
        <authorList>
            <person name="Kaji H."/>
            <person name="Kamiie J."/>
            <person name="Kawakami H."/>
            <person name="Kido K."/>
            <person name="Yamauchi Y."/>
            <person name="Shinkawa T."/>
            <person name="Taoka M."/>
            <person name="Takahashi N."/>
            <person name="Isobe T."/>
        </authorList>
    </citation>
    <scope>GLYCOSYLATION [LARGE SCALE ANALYSIS] AT ASN-315</scope>
    <scope>IDENTIFICATION BY MASS SPECTROMETRY</scope>
    <source>
        <strain>Bristol N2</strain>
    </source>
</reference>
<reference key="4">
    <citation type="journal article" date="2015" name="Neuron">
        <title>C. elegans Punctin Clusters GABA(A) Receptors via Neuroligin Binding and UNC-40/DCC Recruitment.</title>
        <authorList>
            <person name="Tu H."/>
            <person name="Pinan-Lucarre B."/>
            <person name="Ji T."/>
            <person name="Jospin M."/>
            <person name="Bessereau J.L."/>
        </authorList>
    </citation>
    <scope>FUNCTION</scope>
    <scope>INTERACTION WITH MADD-4 AND UNC-49</scope>
    <scope>SUBCELLULAR LOCATION</scope>
    <scope>DOMAIN</scope>
    <scope>MUTAGENESIS OF 786-THR--VAL-798</scope>
</reference>
<reference key="5">
    <citation type="journal article" date="2015" name="Neuron">
        <title>MADD-4/Punctin and Neurexin Organize C. elegans GABAergic Postsynapses through Neuroligin.</title>
        <authorList>
            <person name="Maro G.S."/>
            <person name="Gao S."/>
            <person name="Olechwier A.M."/>
            <person name="Hung W.L."/>
            <person name="Liu M."/>
            <person name="Oezkan E."/>
            <person name="Zhen M."/>
            <person name="Shen K."/>
        </authorList>
    </citation>
    <scope>FUNCTION</scope>
    <scope>INTERACTION WITH MADD-4</scope>
    <scope>SUBCELLULAR LOCATION</scope>
    <scope>DOMAIN</scope>
    <scope>MUTAGENESIS OF 796-ILE--VAL-798</scope>
</reference>
<feature type="signal peptide" evidence="3">
    <location>
        <begin position="1"/>
        <end position="17"/>
    </location>
</feature>
<feature type="chain" id="PRO_0000248519" description="Neuroligin-1">
    <location>
        <begin position="18"/>
        <end position="798"/>
    </location>
</feature>
<feature type="topological domain" description="Extracellular" evidence="3">
    <location>
        <begin position="18"/>
        <end position="685"/>
    </location>
</feature>
<feature type="transmembrane region" description="Helical" evidence="3">
    <location>
        <begin position="686"/>
        <end position="706"/>
    </location>
</feature>
<feature type="topological domain" description="Cytoplasmic" evidence="3">
    <location>
        <begin position="707"/>
        <end position="798"/>
    </location>
</feature>
<feature type="region of interest" description="Disordered" evidence="4">
    <location>
        <begin position="636"/>
        <end position="676"/>
    </location>
</feature>
<feature type="region of interest" description="Disordered" evidence="4">
    <location>
        <begin position="731"/>
        <end position="765"/>
    </location>
</feature>
<feature type="compositionally biased region" description="Pro residues" evidence="4">
    <location>
        <begin position="639"/>
        <end position="652"/>
    </location>
</feature>
<feature type="compositionally biased region" description="Low complexity" evidence="4">
    <location>
        <begin position="653"/>
        <end position="665"/>
    </location>
</feature>
<feature type="glycosylation site" description="N-linked (GlcNAc...) asparagine" evidence="3">
    <location>
        <position position="164"/>
    </location>
</feature>
<feature type="glycosylation site" description="N-linked (GlcNAc...) asparagine" evidence="3">
    <location>
        <position position="292"/>
    </location>
</feature>
<feature type="glycosylation site" description="N-linked (GlcNAc...) asparagine" evidence="5 6">
    <location>
        <position position="315"/>
    </location>
</feature>
<feature type="disulfide bond" evidence="1">
    <location>
        <begin position="86"/>
        <end position="125"/>
    </location>
</feature>
<feature type="disulfide bond" evidence="1">
    <location>
        <begin position="288"/>
        <end position="307"/>
    </location>
</feature>
<feature type="splice variant" id="VSP_020296" description="In isoform b." evidence="9">
    <location>
        <begin position="782"/>
        <end position="784"/>
    </location>
</feature>
<feature type="mutagenesis site" description="Disruption of GABA(A) receptor clustering." evidence="8">
    <location>
        <begin position="786"/>
        <end position="798"/>
    </location>
</feature>
<feature type="mutagenesis site" description="Disruption of GABA(A) receptor clustering." evidence="7">
    <location>
        <begin position="796"/>
        <end position="798"/>
    </location>
</feature>